<proteinExistence type="predicted"/>
<sequence length="120" mass="13645">MSQITSKGRRILDKKIRTFPVGFTSRKVAGHVLNISPYFLLAFSYAENKGQSAFEEIKGSNVIDMSCVICFNFSCHLFVVIFISRSTETIPTTKLLLSKYIFYCVNALELTLFLSYKSYS</sequence>
<name>YG1V_YEAST</name>
<feature type="chain" id="PRO_0000202795" description="Uncharacterized protein YGR045C">
    <location>
        <begin position="1"/>
        <end position="120"/>
    </location>
</feature>
<feature type="transmembrane region" description="Helical" evidence="1">
    <location>
        <begin position="63"/>
        <end position="83"/>
    </location>
</feature>
<protein>
    <recommendedName>
        <fullName>Uncharacterized protein YGR045C</fullName>
    </recommendedName>
</protein>
<organism>
    <name type="scientific">Saccharomyces cerevisiae (strain ATCC 204508 / S288c)</name>
    <name type="common">Baker's yeast</name>
    <dbReference type="NCBI Taxonomy" id="559292"/>
    <lineage>
        <taxon>Eukaryota</taxon>
        <taxon>Fungi</taxon>
        <taxon>Dikarya</taxon>
        <taxon>Ascomycota</taxon>
        <taxon>Saccharomycotina</taxon>
        <taxon>Saccharomycetes</taxon>
        <taxon>Saccharomycetales</taxon>
        <taxon>Saccharomycetaceae</taxon>
        <taxon>Saccharomyces</taxon>
    </lineage>
</organism>
<reference key="1">
    <citation type="journal article" date="1997" name="Nature">
        <title>The nucleotide sequence of Saccharomyces cerevisiae chromosome VII.</title>
        <authorList>
            <person name="Tettelin H."/>
            <person name="Agostoni-Carbone M.L."/>
            <person name="Albermann K."/>
            <person name="Albers M."/>
            <person name="Arroyo J."/>
            <person name="Backes U."/>
            <person name="Barreiros T."/>
            <person name="Bertani I."/>
            <person name="Bjourson A.J."/>
            <person name="Brueckner M."/>
            <person name="Bruschi C.V."/>
            <person name="Carignani G."/>
            <person name="Castagnoli L."/>
            <person name="Cerdan E."/>
            <person name="Clemente M.L."/>
            <person name="Coblenz A."/>
            <person name="Coglievina M."/>
            <person name="Coissac E."/>
            <person name="Defoor E."/>
            <person name="Del Bino S."/>
            <person name="Delius H."/>
            <person name="Delneri D."/>
            <person name="de Wergifosse P."/>
            <person name="Dujon B."/>
            <person name="Durand P."/>
            <person name="Entian K.-D."/>
            <person name="Eraso P."/>
            <person name="Escribano V."/>
            <person name="Fabiani L."/>
            <person name="Fartmann B."/>
            <person name="Feroli F."/>
            <person name="Feuermann M."/>
            <person name="Frontali L."/>
            <person name="Garcia-Gonzalez M."/>
            <person name="Garcia-Saez M.I."/>
            <person name="Goffeau A."/>
            <person name="Guerreiro P."/>
            <person name="Hani J."/>
            <person name="Hansen M."/>
            <person name="Hebling U."/>
            <person name="Hernandez K."/>
            <person name="Heumann K."/>
            <person name="Hilger F."/>
            <person name="Hofmann B."/>
            <person name="Indge K.J."/>
            <person name="James C.M."/>
            <person name="Klima R."/>
            <person name="Koetter P."/>
            <person name="Kramer B."/>
            <person name="Kramer W."/>
            <person name="Lauquin G."/>
            <person name="Leuther H."/>
            <person name="Louis E.J."/>
            <person name="Maillier E."/>
            <person name="Marconi A."/>
            <person name="Martegani E."/>
            <person name="Mazon M.J."/>
            <person name="Mazzoni C."/>
            <person name="McReynolds A.D.K."/>
            <person name="Melchioretto P."/>
            <person name="Mewes H.-W."/>
            <person name="Minenkova O."/>
            <person name="Mueller-Auer S."/>
            <person name="Nawrocki A."/>
            <person name="Netter P."/>
            <person name="Neu R."/>
            <person name="Nombela C."/>
            <person name="Oliver S.G."/>
            <person name="Panzeri L."/>
            <person name="Paoluzi S."/>
            <person name="Plevani P."/>
            <person name="Portetelle D."/>
            <person name="Portillo F."/>
            <person name="Potier S."/>
            <person name="Purnelle B."/>
            <person name="Rieger M."/>
            <person name="Riles L."/>
            <person name="Rinaldi T."/>
            <person name="Robben J."/>
            <person name="Rodrigues-Pousada C."/>
            <person name="Rodriguez-Belmonte E."/>
            <person name="Rodriguez-Torres A.M."/>
            <person name="Rose M."/>
            <person name="Ruzzi M."/>
            <person name="Saliola M."/>
            <person name="Sanchez-Perez M."/>
            <person name="Schaefer B."/>
            <person name="Schaefer M."/>
            <person name="Scharfe M."/>
            <person name="Schmidheini T."/>
            <person name="Schreer A."/>
            <person name="Skala J."/>
            <person name="Souciet J.-L."/>
            <person name="Steensma H.Y."/>
            <person name="Talla E."/>
            <person name="Thierry A."/>
            <person name="Vandenbol M."/>
            <person name="van der Aart Q.J.M."/>
            <person name="Van Dyck L."/>
            <person name="Vanoni M."/>
            <person name="Verhasselt P."/>
            <person name="Voet M."/>
            <person name="Volckaert G."/>
            <person name="Wambutt R."/>
            <person name="Watson M.D."/>
            <person name="Weber N."/>
            <person name="Wedler E."/>
            <person name="Wedler H."/>
            <person name="Wipfli P."/>
            <person name="Wolf K."/>
            <person name="Wright L.F."/>
            <person name="Zaccaria P."/>
            <person name="Zimmermann M."/>
            <person name="Zollner A."/>
            <person name="Kleine K."/>
        </authorList>
    </citation>
    <scope>NUCLEOTIDE SEQUENCE [LARGE SCALE GENOMIC DNA]</scope>
    <source>
        <strain>ATCC 204508 / S288c</strain>
    </source>
</reference>
<reference key="2">
    <citation type="journal article" date="2014" name="G3 (Bethesda)">
        <title>The reference genome sequence of Saccharomyces cerevisiae: Then and now.</title>
        <authorList>
            <person name="Engel S.R."/>
            <person name="Dietrich F.S."/>
            <person name="Fisk D.G."/>
            <person name="Binkley G."/>
            <person name="Balakrishnan R."/>
            <person name="Costanzo M.C."/>
            <person name="Dwight S.S."/>
            <person name="Hitz B.C."/>
            <person name="Karra K."/>
            <person name="Nash R.S."/>
            <person name="Weng S."/>
            <person name="Wong E.D."/>
            <person name="Lloyd P."/>
            <person name="Skrzypek M.S."/>
            <person name="Miyasato S.R."/>
            <person name="Simison M."/>
            <person name="Cherry J.M."/>
        </authorList>
    </citation>
    <scope>GENOME REANNOTATION</scope>
    <source>
        <strain>ATCC 204508 / S288c</strain>
    </source>
</reference>
<evidence type="ECO:0000255" key="1"/>
<evidence type="ECO:0000305" key="2"/>
<comment type="subcellular location">
    <subcellularLocation>
        <location evidence="2">Membrane</location>
        <topology evidence="2">Single-pass membrane protein</topology>
    </subcellularLocation>
</comment>
<accession>P53229</accession>
<accession>A0A1S0T083</accession>
<keyword id="KW-0472">Membrane</keyword>
<keyword id="KW-1185">Reference proteome</keyword>
<keyword id="KW-0812">Transmembrane</keyword>
<keyword id="KW-1133">Transmembrane helix</keyword>
<gene>
    <name type="ordered locus">YGR045C</name>
</gene>
<dbReference type="EMBL" id="Z72830">
    <property type="protein sequence ID" value="CAA97044.1"/>
    <property type="molecule type" value="Genomic_DNA"/>
</dbReference>
<dbReference type="EMBL" id="BK006941">
    <property type="protein sequence ID" value="DAA80302.1"/>
    <property type="molecule type" value="Genomic_DNA"/>
</dbReference>
<dbReference type="PIR" id="S64339">
    <property type="entry name" value="S64339"/>
</dbReference>
<dbReference type="RefSeq" id="NP_001335782.1">
    <property type="nucleotide sequence ID" value="NM_001348841.1"/>
</dbReference>
<dbReference type="DIP" id="DIP-5515N"/>
<dbReference type="FunCoup" id="P53229">
    <property type="interactions" value="40"/>
</dbReference>
<dbReference type="STRING" id="4932.YGR045C"/>
<dbReference type="PaxDb" id="4932-YGR045C"/>
<dbReference type="EnsemblFungi" id="YGR045C_mRNA">
    <property type="protein sequence ID" value="YGR045C"/>
    <property type="gene ID" value="YGR045C"/>
</dbReference>
<dbReference type="GeneID" id="852936"/>
<dbReference type="AGR" id="SGD:S000003277"/>
<dbReference type="SGD" id="S000003277">
    <property type="gene designation" value="YGR045C"/>
</dbReference>
<dbReference type="HOGENOM" id="CLU_2051477_0_0_1"/>
<dbReference type="InParanoid" id="P53229"/>
<dbReference type="OrthoDB" id="10487138at2759"/>
<dbReference type="PRO" id="PR:P53229"/>
<dbReference type="Proteomes" id="UP000002311">
    <property type="component" value="Chromosome VII"/>
</dbReference>
<dbReference type="RNAct" id="P53229">
    <property type="molecule type" value="protein"/>
</dbReference>
<dbReference type="GO" id="GO:0016020">
    <property type="term" value="C:membrane"/>
    <property type="evidence" value="ECO:0007669"/>
    <property type="project" value="UniProtKB-SubCell"/>
</dbReference>